<keyword id="KW-0150">Chloroplast</keyword>
<keyword id="KW-0472">Membrane</keyword>
<keyword id="KW-0602">Photosynthesis</keyword>
<keyword id="KW-0604">Photosystem II</keyword>
<keyword id="KW-0934">Plastid</keyword>
<keyword id="KW-0674">Reaction center</keyword>
<keyword id="KW-0793">Thylakoid</keyword>
<keyword id="KW-0812">Transmembrane</keyword>
<keyword id="KW-1133">Transmembrane helix</keyword>
<sequence length="34" mass="3783">MEVNILAFIATALFILVPTAFLLIIYVKTVSQND</sequence>
<reference key="1">
    <citation type="journal article" date="2007" name="BMC Plant Biol.">
        <title>Complete plastid genome sequences suggest strong selection for retention of photosynthetic genes in the parasitic plant genus Cuscuta.</title>
        <authorList>
            <person name="McNeal J.R."/>
            <person name="Kuehl J.V."/>
            <person name="Boore J.L."/>
            <person name="dePamphilis C.W."/>
        </authorList>
    </citation>
    <scope>NUCLEOTIDE SEQUENCE [LARGE SCALE GENOMIC DNA]</scope>
</reference>
<dbReference type="EMBL" id="EU118126">
    <property type="protein sequence ID" value="ABV02342.1"/>
    <property type="molecule type" value="Genomic_DNA"/>
</dbReference>
<dbReference type="RefSeq" id="YP_001468302.1">
    <property type="nucleotide sequence ID" value="NC_009808.1"/>
</dbReference>
<dbReference type="SMR" id="A7Y3C1"/>
<dbReference type="GeneID" id="5601215"/>
<dbReference type="GO" id="GO:0009535">
    <property type="term" value="C:chloroplast thylakoid membrane"/>
    <property type="evidence" value="ECO:0007669"/>
    <property type="project" value="UniProtKB-SubCell"/>
</dbReference>
<dbReference type="GO" id="GO:0009523">
    <property type="term" value="C:photosystem II"/>
    <property type="evidence" value="ECO:0007669"/>
    <property type="project" value="UniProtKB-KW"/>
</dbReference>
<dbReference type="GO" id="GO:0019684">
    <property type="term" value="P:photosynthesis, light reaction"/>
    <property type="evidence" value="ECO:0007669"/>
    <property type="project" value="InterPro"/>
</dbReference>
<dbReference type="HAMAP" id="MF_00438">
    <property type="entry name" value="PSII_PsbM"/>
    <property type="match status" value="1"/>
</dbReference>
<dbReference type="InterPro" id="IPR007826">
    <property type="entry name" value="PSII_PsbM"/>
</dbReference>
<dbReference type="InterPro" id="IPR037269">
    <property type="entry name" value="PSII_PsbM_sf"/>
</dbReference>
<dbReference type="NCBIfam" id="TIGR03038">
    <property type="entry name" value="PS_II_psbM"/>
    <property type="match status" value="1"/>
</dbReference>
<dbReference type="PANTHER" id="PTHR35774">
    <property type="entry name" value="PHOTOSYSTEM II REACTION CENTER PROTEIN M"/>
    <property type="match status" value="1"/>
</dbReference>
<dbReference type="PANTHER" id="PTHR35774:SF1">
    <property type="entry name" value="PHOTOSYSTEM II REACTION CENTER PROTEIN M"/>
    <property type="match status" value="1"/>
</dbReference>
<dbReference type="Pfam" id="PF05151">
    <property type="entry name" value="PsbM"/>
    <property type="match status" value="1"/>
</dbReference>
<dbReference type="SUPFAM" id="SSF161033">
    <property type="entry name" value="Photosystem II reaction center protein M, PsbM"/>
    <property type="match status" value="1"/>
</dbReference>
<accession>A7Y3C1</accession>
<protein>
    <recommendedName>
        <fullName evidence="1">Photosystem II reaction center protein M</fullName>
        <shortName evidence="1">PSII-M</shortName>
    </recommendedName>
</protein>
<name>PSBM_IPOPU</name>
<feature type="chain" id="PRO_0000325737" description="Photosystem II reaction center protein M">
    <location>
        <begin position="1"/>
        <end position="34"/>
    </location>
</feature>
<feature type="transmembrane region" description="Helical" evidence="1">
    <location>
        <begin position="5"/>
        <end position="25"/>
    </location>
</feature>
<comment type="function">
    <text evidence="1">One of the components of the core complex of photosystem II (PSII). PSII is a light-driven water:plastoquinone oxidoreductase that uses light energy to abstract electrons from H(2)O, generating O(2) and a proton gradient subsequently used for ATP formation. It consists of a core antenna complex that captures photons, and an electron transfer chain that converts photonic excitation into a charge separation. This subunit is found at the monomer-monomer interface.</text>
</comment>
<comment type="subunit">
    <text evidence="1">PSII is composed of 1 copy each of membrane proteins PsbA, PsbB, PsbC, PsbD, PsbE, PsbF, PsbH, PsbI, PsbJ, PsbK, PsbL, PsbM, PsbT, PsbX, PsbY, PsbZ, Psb30/Ycf12, at least 3 peripheral proteins of the oxygen-evolving complex and a large number of cofactors. It forms dimeric complexes.</text>
</comment>
<comment type="subcellular location">
    <subcellularLocation>
        <location evidence="1">Plastid</location>
        <location evidence="1">Chloroplast thylakoid membrane</location>
        <topology evidence="1">Single-pass membrane protein</topology>
    </subcellularLocation>
</comment>
<comment type="similarity">
    <text evidence="1">Belongs to the PsbM family.</text>
</comment>
<gene>
    <name evidence="1" type="primary">psbM</name>
</gene>
<geneLocation type="chloroplast"/>
<organism>
    <name type="scientific">Ipomoea purpurea</name>
    <name type="common">Common morning glory</name>
    <name type="synonym">Pharbitis purpurea</name>
    <dbReference type="NCBI Taxonomy" id="4121"/>
    <lineage>
        <taxon>Eukaryota</taxon>
        <taxon>Viridiplantae</taxon>
        <taxon>Streptophyta</taxon>
        <taxon>Embryophyta</taxon>
        <taxon>Tracheophyta</taxon>
        <taxon>Spermatophyta</taxon>
        <taxon>Magnoliopsida</taxon>
        <taxon>eudicotyledons</taxon>
        <taxon>Gunneridae</taxon>
        <taxon>Pentapetalae</taxon>
        <taxon>asterids</taxon>
        <taxon>lamiids</taxon>
        <taxon>Solanales</taxon>
        <taxon>Convolvulaceae</taxon>
        <taxon>Ipomoeeae</taxon>
        <taxon>Ipomoea</taxon>
    </lineage>
</organism>
<proteinExistence type="inferred from homology"/>
<evidence type="ECO:0000255" key="1">
    <source>
        <dbReference type="HAMAP-Rule" id="MF_00438"/>
    </source>
</evidence>